<gene>
    <name evidence="1" type="primary">rsmH</name>
    <name type="synonym">mraW</name>
    <name type="ordered locus">BAMEG_0570</name>
</gene>
<sequence>MFNHVTVLLKETVDGLDIKPDGTYVDCTLGGGGHSSYLLSQLTEGGRLIAFDQDEIAIQNAKEKFSSYGEQFITVKSNFRYLSEKLQELGITEVDGILFDLGVSSPQLDTPERGFSYHHDAPLDMRMDQDAPLTAYDVVNSWSYEQLVRIFFQYGEEKFSKQIARKIEAYRENKAIETTGELVELIKEGIPAPARRTGGHPAKRVFQAIRIAVNDELKVFEEALESAIEMVKPGGRVSVITFHSLEDRICKTTFKRNSTTPQLPPGLPIIPDEFKPKLKLITRKPILPSDIELEENNRARSAKLRIAEKR</sequence>
<accession>C3L6F3</accession>
<comment type="function">
    <text evidence="1">Specifically methylates the N4 position of cytidine in position 1402 (C1402) of 16S rRNA.</text>
</comment>
<comment type="catalytic activity">
    <reaction evidence="1">
        <text>cytidine(1402) in 16S rRNA + S-adenosyl-L-methionine = N(4)-methylcytidine(1402) in 16S rRNA + S-adenosyl-L-homocysteine + H(+)</text>
        <dbReference type="Rhea" id="RHEA:42928"/>
        <dbReference type="Rhea" id="RHEA-COMP:10286"/>
        <dbReference type="Rhea" id="RHEA-COMP:10287"/>
        <dbReference type="ChEBI" id="CHEBI:15378"/>
        <dbReference type="ChEBI" id="CHEBI:57856"/>
        <dbReference type="ChEBI" id="CHEBI:59789"/>
        <dbReference type="ChEBI" id="CHEBI:74506"/>
        <dbReference type="ChEBI" id="CHEBI:82748"/>
        <dbReference type="EC" id="2.1.1.199"/>
    </reaction>
</comment>
<comment type="subcellular location">
    <subcellularLocation>
        <location evidence="1">Cytoplasm</location>
    </subcellularLocation>
</comment>
<comment type="similarity">
    <text evidence="1">Belongs to the methyltransferase superfamily. RsmH family.</text>
</comment>
<keyword id="KW-0963">Cytoplasm</keyword>
<keyword id="KW-0489">Methyltransferase</keyword>
<keyword id="KW-0698">rRNA processing</keyword>
<keyword id="KW-0949">S-adenosyl-L-methionine</keyword>
<keyword id="KW-0808">Transferase</keyword>
<protein>
    <recommendedName>
        <fullName evidence="1">Ribosomal RNA small subunit methyltransferase H</fullName>
        <ecNumber evidence="1">2.1.1.199</ecNumber>
    </recommendedName>
    <alternativeName>
        <fullName evidence="1">16S rRNA m(4)C1402 methyltransferase</fullName>
    </alternativeName>
    <alternativeName>
        <fullName evidence="1">rRNA (cytosine-N(4)-)-methyltransferase RsmH</fullName>
    </alternativeName>
</protein>
<feature type="chain" id="PRO_0000386727" description="Ribosomal RNA small subunit methyltransferase H">
    <location>
        <begin position="1"/>
        <end position="310"/>
    </location>
</feature>
<feature type="binding site" evidence="1">
    <location>
        <begin position="32"/>
        <end position="34"/>
    </location>
    <ligand>
        <name>S-adenosyl-L-methionine</name>
        <dbReference type="ChEBI" id="CHEBI:59789"/>
    </ligand>
</feature>
<feature type="binding site" evidence="1">
    <location>
        <position position="52"/>
    </location>
    <ligand>
        <name>S-adenosyl-L-methionine</name>
        <dbReference type="ChEBI" id="CHEBI:59789"/>
    </ligand>
</feature>
<feature type="binding site" evidence="1">
    <location>
        <position position="79"/>
    </location>
    <ligand>
        <name>S-adenosyl-L-methionine</name>
        <dbReference type="ChEBI" id="CHEBI:59789"/>
    </ligand>
</feature>
<feature type="binding site" evidence="1">
    <location>
        <position position="100"/>
    </location>
    <ligand>
        <name>S-adenosyl-L-methionine</name>
        <dbReference type="ChEBI" id="CHEBI:59789"/>
    </ligand>
</feature>
<feature type="binding site" evidence="1">
    <location>
        <position position="107"/>
    </location>
    <ligand>
        <name>S-adenosyl-L-methionine</name>
        <dbReference type="ChEBI" id="CHEBI:59789"/>
    </ligand>
</feature>
<reference key="1">
    <citation type="submission" date="2008-10" db="EMBL/GenBank/DDBJ databases">
        <title>Genome sequence of Bacillus anthracis str. CDC 684.</title>
        <authorList>
            <person name="Dodson R.J."/>
            <person name="Munk A.C."/>
            <person name="Brettin T."/>
            <person name="Bruce D."/>
            <person name="Detter C."/>
            <person name="Tapia R."/>
            <person name="Han C."/>
            <person name="Sutton G."/>
            <person name="Sims D."/>
        </authorList>
    </citation>
    <scope>NUCLEOTIDE SEQUENCE [LARGE SCALE GENOMIC DNA]</scope>
    <source>
        <strain>CDC 684 / NRRL 3495</strain>
    </source>
</reference>
<dbReference type="EC" id="2.1.1.199" evidence="1"/>
<dbReference type="EMBL" id="CP001215">
    <property type="protein sequence ID" value="ACP15675.1"/>
    <property type="molecule type" value="Genomic_DNA"/>
</dbReference>
<dbReference type="RefSeq" id="WP_000481786.1">
    <property type="nucleotide sequence ID" value="NC_012581.1"/>
</dbReference>
<dbReference type="SMR" id="C3L6F3"/>
<dbReference type="GeneID" id="45023747"/>
<dbReference type="KEGG" id="bah:BAMEG_0570"/>
<dbReference type="HOGENOM" id="CLU_038422_2_0_9"/>
<dbReference type="GO" id="GO:0005737">
    <property type="term" value="C:cytoplasm"/>
    <property type="evidence" value="ECO:0007669"/>
    <property type="project" value="UniProtKB-SubCell"/>
</dbReference>
<dbReference type="GO" id="GO:0071424">
    <property type="term" value="F:rRNA (cytosine-N4-)-methyltransferase activity"/>
    <property type="evidence" value="ECO:0007669"/>
    <property type="project" value="UniProtKB-UniRule"/>
</dbReference>
<dbReference type="GO" id="GO:0070475">
    <property type="term" value="P:rRNA base methylation"/>
    <property type="evidence" value="ECO:0007669"/>
    <property type="project" value="UniProtKB-UniRule"/>
</dbReference>
<dbReference type="FunFam" id="1.10.150.170:FF:000001">
    <property type="entry name" value="Ribosomal RNA small subunit methyltransferase H"/>
    <property type="match status" value="1"/>
</dbReference>
<dbReference type="Gene3D" id="1.10.150.170">
    <property type="entry name" value="Putative methyltransferase TM0872, insert domain"/>
    <property type="match status" value="1"/>
</dbReference>
<dbReference type="Gene3D" id="3.40.50.150">
    <property type="entry name" value="Vaccinia Virus protein VP39"/>
    <property type="match status" value="1"/>
</dbReference>
<dbReference type="HAMAP" id="MF_01007">
    <property type="entry name" value="16SrRNA_methyltr_H"/>
    <property type="match status" value="1"/>
</dbReference>
<dbReference type="InterPro" id="IPR002903">
    <property type="entry name" value="RsmH"/>
</dbReference>
<dbReference type="InterPro" id="IPR023397">
    <property type="entry name" value="SAM-dep_MeTrfase_MraW_recog"/>
</dbReference>
<dbReference type="InterPro" id="IPR029063">
    <property type="entry name" value="SAM-dependent_MTases_sf"/>
</dbReference>
<dbReference type="NCBIfam" id="TIGR00006">
    <property type="entry name" value="16S rRNA (cytosine(1402)-N(4))-methyltransferase RsmH"/>
    <property type="match status" value="1"/>
</dbReference>
<dbReference type="PANTHER" id="PTHR11265:SF0">
    <property type="entry name" value="12S RRNA N4-METHYLCYTIDINE METHYLTRANSFERASE"/>
    <property type="match status" value="1"/>
</dbReference>
<dbReference type="PANTHER" id="PTHR11265">
    <property type="entry name" value="S-ADENOSYL-METHYLTRANSFERASE MRAW"/>
    <property type="match status" value="1"/>
</dbReference>
<dbReference type="Pfam" id="PF01795">
    <property type="entry name" value="Methyltransf_5"/>
    <property type="match status" value="1"/>
</dbReference>
<dbReference type="PIRSF" id="PIRSF004486">
    <property type="entry name" value="MraW"/>
    <property type="match status" value="1"/>
</dbReference>
<dbReference type="SUPFAM" id="SSF81799">
    <property type="entry name" value="Putative methyltransferase TM0872, insert domain"/>
    <property type="match status" value="1"/>
</dbReference>
<dbReference type="SUPFAM" id="SSF53335">
    <property type="entry name" value="S-adenosyl-L-methionine-dependent methyltransferases"/>
    <property type="match status" value="1"/>
</dbReference>
<evidence type="ECO:0000255" key="1">
    <source>
        <dbReference type="HAMAP-Rule" id="MF_01007"/>
    </source>
</evidence>
<organism>
    <name type="scientific">Bacillus anthracis (strain CDC 684 / NRRL 3495)</name>
    <dbReference type="NCBI Taxonomy" id="568206"/>
    <lineage>
        <taxon>Bacteria</taxon>
        <taxon>Bacillati</taxon>
        <taxon>Bacillota</taxon>
        <taxon>Bacilli</taxon>
        <taxon>Bacillales</taxon>
        <taxon>Bacillaceae</taxon>
        <taxon>Bacillus</taxon>
        <taxon>Bacillus cereus group</taxon>
    </lineage>
</organism>
<name>RSMH_BACAC</name>
<proteinExistence type="inferred from homology"/>